<comment type="function">
    <text>Hydrolyzes a wide range of dipeptides but unable to hydrolyze dipeptides containing proline. Highest activity against Met-Ala.</text>
</comment>
<comment type="catalytic activity">
    <reaction>
        <text>an L-aminoacyl-L-amino acid + H2O = 2 an L-alpha-amino acid</text>
        <dbReference type="Rhea" id="RHEA:48940"/>
        <dbReference type="ChEBI" id="CHEBI:15377"/>
        <dbReference type="ChEBI" id="CHEBI:59869"/>
        <dbReference type="ChEBI" id="CHEBI:77460"/>
        <dbReference type="EC" id="3.4.13.19"/>
    </reaction>
</comment>
<comment type="activity regulation">
    <text>Inhibited by Zn(2+), Cu(2+), Ca(2+) and Cd(2+).</text>
</comment>
<comment type="biophysicochemical properties">
    <phDependence>
        <text>Optimum pH is 6.0.</text>
    </phDependence>
    <temperatureDependence>
        <text>Optimum temperature is 55 degrees Celsius.</text>
    </temperatureDependence>
</comment>
<comment type="subunit">
    <text evidence="2">Homooctamer.</text>
</comment>
<comment type="similarity">
    <text evidence="2">Belongs to the peptidase C69 family.</text>
</comment>
<sequence>MKQTECTTILVGKKASIDGSTMIARSEDGGRVIIPEGFKVVNPEDQPKHYTSVISKQKIDDEDLAETPLRYTSAPDVSGKNGIWGAAGINADNVAMTATETITTNSRIQGVDPILDPSEGGLGEEDFVTLTLPYLHSAFDGVKRVGYLVEKYGTYEMNGMAFSDKDNIWYLETIGGHHWIARRIPDDAYVIAPNRLNIDTFDFDDSENFATASDLKDLIDEYHLNPDREGYNMRHIFGSSTIKDAHYNNPRAWYIHNYFDPDFGGTPADQDQPFICRANRLISIEDIKWAESSHYQDTPYDAYGDQGTPEQKKTFRPIGINRNFETHILQIRNDVPAEIAGVQWLAFGPNTFNSMLPFYTNVTTTPEAWQTTPKFNLNKIFWLNKLTAQLGDTNYRVYGELEDAFEQKSLAQCHKIQHETDKEVKNLSGKELQDKLIAANQKMSDTVYNNTVELLGQMVDEGHGLMTLKYDLLD</sequence>
<dbReference type="EC" id="3.4.13.19"/>
<dbReference type="EMBL" id="U34257">
    <property type="protein sequence ID" value="AAC43971.1"/>
    <property type="molecule type" value="Genomic_DNA"/>
</dbReference>
<dbReference type="EMBL" id="Z38063">
    <property type="protein sequence ID" value="CAA86210.1"/>
    <property type="molecule type" value="Genomic_DNA"/>
</dbReference>
<dbReference type="PIR" id="JC6042">
    <property type="entry name" value="JC6042"/>
</dbReference>
<dbReference type="RefSeq" id="WP_003630880.1">
    <property type="nucleotide sequence ID" value="NZ_SKBC01000052.1"/>
</dbReference>
<dbReference type="RefSeq" id="WP_012211344.1">
    <property type="nucleotide sequence ID" value="NZ_WCHF01000003.1"/>
</dbReference>
<dbReference type="SMR" id="Q48558"/>
<dbReference type="MEROPS" id="C69.001"/>
<dbReference type="eggNOG" id="COG4690">
    <property type="taxonomic scope" value="Bacteria"/>
</dbReference>
<dbReference type="OrthoDB" id="9764088at2"/>
<dbReference type="GO" id="GO:0070004">
    <property type="term" value="F:cysteine-type exopeptidase activity"/>
    <property type="evidence" value="ECO:0007669"/>
    <property type="project" value="InterPro"/>
</dbReference>
<dbReference type="GO" id="GO:0016805">
    <property type="term" value="F:dipeptidase activity"/>
    <property type="evidence" value="ECO:0007669"/>
    <property type="project" value="UniProtKB-KW"/>
</dbReference>
<dbReference type="GO" id="GO:0006508">
    <property type="term" value="P:proteolysis"/>
    <property type="evidence" value="ECO:0007669"/>
    <property type="project" value="UniProtKB-KW"/>
</dbReference>
<dbReference type="InterPro" id="IPR047804">
    <property type="entry name" value="C69_dipept_A-like"/>
</dbReference>
<dbReference type="InterPro" id="IPR005322">
    <property type="entry name" value="Peptidase_C69"/>
</dbReference>
<dbReference type="NCBIfam" id="NF033678">
    <property type="entry name" value="C69_fam_dipept"/>
    <property type="match status" value="1"/>
</dbReference>
<dbReference type="PANTHER" id="PTHR12994:SF17">
    <property type="entry name" value="LD30995P"/>
    <property type="match status" value="1"/>
</dbReference>
<dbReference type="PANTHER" id="PTHR12994">
    <property type="entry name" value="SECERNIN"/>
    <property type="match status" value="1"/>
</dbReference>
<dbReference type="Pfam" id="PF03577">
    <property type="entry name" value="Peptidase_C69"/>
    <property type="match status" value="1"/>
</dbReference>
<gene>
    <name type="primary">pepDA</name>
    <name type="synonym">pepD</name>
</gene>
<evidence type="ECO:0000255" key="1"/>
<evidence type="ECO:0000305" key="2"/>
<protein>
    <recommendedName>
        <fullName>Dipeptidase A</fullName>
        <ecNumber>3.4.13.19</ecNumber>
    </recommendedName>
</protein>
<proteinExistence type="evidence at protein level"/>
<organism>
    <name type="scientific">Lactobacillus helveticus</name>
    <name type="common">Lactobacillus suntoryeus</name>
    <dbReference type="NCBI Taxonomy" id="1587"/>
    <lineage>
        <taxon>Bacteria</taxon>
        <taxon>Bacillati</taxon>
        <taxon>Bacillota</taxon>
        <taxon>Bacilli</taxon>
        <taxon>Lactobacillales</taxon>
        <taxon>Lactobacillaceae</taxon>
        <taxon>Lactobacillus</taxon>
    </lineage>
</organism>
<name>PEPDA_LACHE</name>
<keyword id="KW-0224">Dipeptidase</keyword>
<keyword id="KW-0378">Hydrolase</keyword>
<keyword id="KW-0645">Protease</keyword>
<feature type="chain" id="PRO_0000220381" description="Dipeptidase A">
    <location>
        <begin position="1"/>
        <end position="474"/>
    </location>
</feature>
<feature type="active site" evidence="1">
    <location>
        <position position="6"/>
    </location>
</feature>
<feature type="sequence conflict" description="In Ref. 2; CAA86210." evidence="2" ref="2">
    <original>T</original>
    <variation>A</variation>
    <location>
        <position position="211"/>
    </location>
</feature>
<reference key="1">
    <citation type="journal article" date="1996" name="J. Bacteriol.">
        <title>Sequencing, distribution, and inactivation of the dipeptidase A gene (pepDA) from Lactobacillus helveticus CNRZ32.</title>
        <authorList>
            <person name="Dudley E.G."/>
            <person name="Husgen A.C."/>
            <person name="He W."/>
            <person name="Steele J.L."/>
        </authorList>
    </citation>
    <scope>NUCLEOTIDE SEQUENCE [GENOMIC DNA]</scope>
    <source>
        <strain>CNRZ 32</strain>
    </source>
</reference>
<reference key="2">
    <citation type="journal article" date="1996" name="Appl. Microbiol. Biotechnol.">
        <title>Molecular characterization, over-expression and purification of a novel dipeptidase from Lactobacillus helveticus.</title>
        <authorList>
            <person name="Vesanto E."/>
            <person name="Peltoniemi K."/>
            <person name="Purtsi T."/>
            <person name="Steele J.L."/>
            <person name="Palva A."/>
        </authorList>
    </citation>
    <scope>NUCLEOTIDE SEQUENCE [GENOMIC DNA]</scope>
    <scope>CHARACTERIZATION</scope>
    <source>
        <strain>53/7</strain>
    </source>
</reference>
<accession>Q48558</accession>
<accession>P71434</accession>